<proteinExistence type="evidence at protein level"/>
<comment type="function">
    <text evidence="4">Is lethal to mice, and may cause hemolytic activity.</text>
</comment>
<comment type="subcellular location">
    <subcellularLocation>
        <location evidence="7">Secreted</location>
    </subcellularLocation>
    <subcellularLocation>
        <location evidence="7">Nematocyst</location>
    </subcellularLocation>
</comment>
<accession>Q76DT2</accession>
<evidence type="ECO:0000250" key="1"/>
<evidence type="ECO:0000255" key="2"/>
<evidence type="ECO:0000255" key="3">
    <source>
        <dbReference type="PROSITE-ProRule" id="PRU00745"/>
    </source>
</evidence>
<evidence type="ECO:0000269" key="4">
    <source>
    </source>
</evidence>
<evidence type="ECO:0000303" key="5">
    <source>
    </source>
</evidence>
<evidence type="ECO:0000303" key="6">
    <source>
    </source>
</evidence>
<evidence type="ECO:0000305" key="7"/>
<name>TX60A_ACTVL</name>
<protein>
    <recommendedName>
        <fullName evidence="6">DELTA-thalatoxin-Avl2a</fullName>
        <shortName evidence="6">DELTA-TATX-Avl2a</shortName>
    </recommendedName>
    <alternativeName>
        <fullName evidence="5">Toxin AvTX-60A</fullName>
        <shortName evidence="5">Av60A</shortName>
    </alternativeName>
</protein>
<dbReference type="EMBL" id="AB107916">
    <property type="protein sequence ID" value="BAD04943.1"/>
    <property type="molecule type" value="mRNA"/>
</dbReference>
<dbReference type="TCDB" id="1.C.39.10.1">
    <property type="family name" value="the membrane attack complex/perforin (macpf) family"/>
</dbReference>
<dbReference type="GO" id="GO:0005576">
    <property type="term" value="C:extracellular region"/>
    <property type="evidence" value="ECO:0007669"/>
    <property type="project" value="UniProtKB-SubCell"/>
</dbReference>
<dbReference type="GO" id="GO:0042151">
    <property type="term" value="C:nematocyst"/>
    <property type="evidence" value="ECO:0007669"/>
    <property type="project" value="UniProtKB-SubCell"/>
</dbReference>
<dbReference type="GO" id="GO:0090729">
    <property type="term" value="F:toxin activity"/>
    <property type="evidence" value="ECO:0007669"/>
    <property type="project" value="UniProtKB-KW"/>
</dbReference>
<dbReference type="GO" id="GO:0031640">
    <property type="term" value="P:killing of cells of another organism"/>
    <property type="evidence" value="ECO:0007669"/>
    <property type="project" value="UniProtKB-KW"/>
</dbReference>
<dbReference type="InterPro" id="IPR020864">
    <property type="entry name" value="MACPF"/>
</dbReference>
<dbReference type="PANTHER" id="PTHR45742">
    <property type="entry name" value="COMPLEMENT COMPONENT C6"/>
    <property type="match status" value="1"/>
</dbReference>
<dbReference type="PANTHER" id="PTHR45742:SF8">
    <property type="entry name" value="FLOCCULATION PROTEIN FLO11"/>
    <property type="match status" value="1"/>
</dbReference>
<dbReference type="Pfam" id="PF01823">
    <property type="entry name" value="MACPF"/>
    <property type="match status" value="1"/>
</dbReference>
<dbReference type="PROSITE" id="PS01186">
    <property type="entry name" value="EGF_2"/>
    <property type="match status" value="1"/>
</dbReference>
<dbReference type="PROSITE" id="PS51412">
    <property type="entry name" value="MACPF_2"/>
    <property type="match status" value="1"/>
</dbReference>
<reference key="1">
    <citation type="journal article" date="2004" name="Toxicon">
        <title>A new membrane-attack complex/perforin (MACPF) domain lethal toxin from the nematocyst venom of the Okinawan sea anemone Actineria villosa.</title>
        <authorList>
            <person name="Oshiro N."/>
            <person name="Kobayashi C."/>
            <person name="Iwanaga S."/>
            <person name="Nozaki M."/>
            <person name="Namikoshi M."/>
            <person name="Spring J."/>
            <person name="Nagai H."/>
        </authorList>
    </citation>
    <scope>NUCLEOTIDE SEQUENCE [MRNA]</scope>
    <scope>PROTEIN SEQUENCE OF 36-63</scope>
    <scope>FUNCTION</scope>
    <source>
        <tissue>Nematoblast</tissue>
    </source>
</reference>
<reference key="2">
    <citation type="journal article" date="2012" name="Toxicon">
        <title>Development of a rational nomenclature for naming peptide and protein toxins from sea anemones.</title>
        <authorList>
            <person name="Oliveira J.S."/>
            <person name="Fuentes-Silva D."/>
            <person name="King G.F."/>
        </authorList>
    </citation>
    <scope>NOMENCLATURE</scope>
</reference>
<organism>
    <name type="scientific">Actineria villosa</name>
    <name type="common">Okinawan sea anemone</name>
    <dbReference type="NCBI Taxonomy" id="227975"/>
    <lineage>
        <taxon>Eukaryota</taxon>
        <taxon>Metazoa</taxon>
        <taxon>Cnidaria</taxon>
        <taxon>Anthozoa</taxon>
        <taxon>Hexacorallia</taxon>
        <taxon>Actiniaria</taxon>
        <taxon>Nynantheae</taxon>
        <taxon>Aliciidae</taxon>
        <taxon>Actineria</taxon>
    </lineage>
</organism>
<sequence>MSPYFKLSSALIFLAITMEALCSPIENTSTSNKDNDKETEHIEISAKPSGISRGALGQGFEIHREDLLSKQFEATGEKIFEDLPMDECTVTTTLGTIERDDSFYNSTESLYQSVASSTKISGSLKGAYTLGVSVAAVTNNIASSEEEVQGLSLNLKAYSMSSILKKNCVNTKPLSKDLVSDFEALDSEITKPWKLSSWKKYKVLLEKYGSHIVKESISGSSIYQYVFAKSNQKFNHRSFTVKACVSLAGPKNASKVGFAGCTGVSQQEIEQSSSQSMIKKLVVRGGKTETRASLIGELDPDQINKFLIEAETDPSPIQYKFEPIWTILKNRYVGTEHFAKAVNLEQFYKGFLHFGCSFLHTSNADNADVEIQKFDFAKTSDPDAPTYVCKVGPEGCQHHEDCHYRAAFWCECGGPYDLARTCLRYKTEKLNSGSTKRECYPNKESGFAWHGCQLHGLSCWCSAPNKNWEETWSGEDTNNALNDVHQVLMEKKRRDQAK</sequence>
<feature type="signal peptide" evidence="2">
    <location>
        <begin position="1"/>
        <end position="22"/>
    </location>
</feature>
<feature type="propeptide" id="PRO_0000239811" evidence="4">
    <location>
        <begin position="23"/>
        <end position="35"/>
    </location>
</feature>
<feature type="chain" id="PRO_0000239812" description="DELTA-thalatoxin-Avl2a">
    <location>
        <begin position="36"/>
        <end position="498"/>
    </location>
</feature>
<feature type="domain" description="MACPF" evidence="3">
    <location>
        <begin position="23"/>
        <end position="359"/>
    </location>
</feature>
<feature type="domain" description="EGF-like">
    <location>
        <begin position="410"/>
        <end position="422"/>
    </location>
</feature>
<feature type="coiled-coil region" evidence="2">
    <location>
        <begin position="135"/>
        <end position="159"/>
    </location>
</feature>
<feature type="disulfide bond" evidence="1">
    <location>
        <begin position="389"/>
        <end position="402"/>
    </location>
</feature>
<feature type="disulfide bond" evidence="1">
    <location>
        <begin position="396"/>
        <end position="410"/>
    </location>
</feature>
<feature type="disulfide bond" evidence="1">
    <location>
        <begin position="412"/>
        <end position="422"/>
    </location>
</feature>
<keyword id="KW-0175">Coiled coil</keyword>
<keyword id="KW-0204">Cytolysis</keyword>
<keyword id="KW-0903">Direct protein sequencing</keyword>
<keyword id="KW-1015">Disulfide bond</keyword>
<keyword id="KW-0245">EGF-like domain</keyword>
<keyword id="KW-0354">Hemolysis</keyword>
<keyword id="KW-0166">Nematocyst</keyword>
<keyword id="KW-0964">Secreted</keyword>
<keyword id="KW-0732">Signal</keyword>
<keyword id="KW-0800">Toxin</keyword>